<proteinExistence type="evidence at protein level"/>
<evidence type="ECO:0000250" key="1">
    <source>
        <dbReference type="UniProtKB" id="Q4QRL3"/>
    </source>
</evidence>
<evidence type="ECO:0000255" key="2"/>
<evidence type="ECO:0000256" key="3">
    <source>
        <dbReference type="SAM" id="MobiDB-lite"/>
    </source>
</evidence>
<evidence type="ECO:0000269" key="4">
    <source>
    </source>
</evidence>
<evidence type="ECO:0000269" key="5">
    <source>
    </source>
</evidence>
<evidence type="ECO:0000269" key="6">
    <source>
    </source>
</evidence>
<evidence type="ECO:0000269" key="7">
    <source>
    </source>
</evidence>
<evidence type="ECO:0000269" key="8">
    <source>
    </source>
</evidence>
<evidence type="ECO:0000303" key="9">
    <source>
    </source>
</evidence>
<evidence type="ECO:0000303" key="10">
    <source>
    </source>
</evidence>
<evidence type="ECO:0000303" key="11">
    <source>
    </source>
</evidence>
<evidence type="ECO:0000303" key="12">
    <source>
    </source>
</evidence>
<evidence type="ECO:0000303" key="13">
    <source>
    </source>
</evidence>
<evidence type="ECO:0000303" key="14">
    <source>
    </source>
</evidence>
<evidence type="ECO:0000303" key="15">
    <source ref="6"/>
</evidence>
<evidence type="ECO:0000305" key="16"/>
<evidence type="ECO:0007744" key="17">
    <source>
    </source>
</evidence>
<evidence type="ECO:0007744" key="18">
    <source>
    </source>
</evidence>
<reference key="1">
    <citation type="journal article" date="2001" name="Genome Res.">
        <title>Towards a catalog of human genes and proteins: sequencing and analysis of 500 novel complete protein coding human cDNAs.</title>
        <authorList>
            <person name="Wiemann S."/>
            <person name="Weil B."/>
            <person name="Wellenreuther R."/>
            <person name="Gassenhuber J."/>
            <person name="Glassl S."/>
            <person name="Ansorge W."/>
            <person name="Boecher M."/>
            <person name="Bloecker H."/>
            <person name="Bauersachs S."/>
            <person name="Blum H."/>
            <person name="Lauber J."/>
            <person name="Duesterhoeft A."/>
            <person name="Beyer A."/>
            <person name="Koehrer K."/>
            <person name="Strack N."/>
            <person name="Mewes H.-W."/>
            <person name="Ottenwaelder B."/>
            <person name="Obermaier B."/>
            <person name="Tampe J."/>
            <person name="Heubner D."/>
            <person name="Wambutt R."/>
            <person name="Korn B."/>
            <person name="Klein M."/>
            <person name="Poustka A."/>
        </authorList>
    </citation>
    <scope>NUCLEOTIDE SEQUENCE [LARGE SCALE MRNA] (ISOFORM 6)</scope>
</reference>
<reference key="2">
    <citation type="journal article" date="2003" name="DNA Res.">
        <title>Characterization of long cDNA clones from human adult spleen. II. The complete sequences of 81 cDNA clones.</title>
        <authorList>
            <person name="Jikuya H."/>
            <person name="Takano J."/>
            <person name="Kikuno R."/>
            <person name="Hirosawa M."/>
            <person name="Nagase T."/>
            <person name="Nomura N."/>
            <person name="Ohara O."/>
        </authorList>
    </citation>
    <scope>NUCLEOTIDE SEQUENCE [LARGE SCALE MRNA] (ISOFORM 2)</scope>
    <scope>VARIANT ALA-886</scope>
    <source>
        <tissue>Spleen</tissue>
    </source>
</reference>
<reference key="3">
    <citation type="journal article" date="2004" name="Nat. Genet.">
        <title>Complete sequencing and characterization of 21,243 full-length human cDNAs.</title>
        <authorList>
            <person name="Ota T."/>
            <person name="Suzuki Y."/>
            <person name="Nishikawa T."/>
            <person name="Otsuki T."/>
            <person name="Sugiyama T."/>
            <person name="Irie R."/>
            <person name="Wakamatsu A."/>
            <person name="Hayashi K."/>
            <person name="Sato H."/>
            <person name="Nagai K."/>
            <person name="Kimura K."/>
            <person name="Makita H."/>
            <person name="Sekine M."/>
            <person name="Obayashi M."/>
            <person name="Nishi T."/>
            <person name="Shibahara T."/>
            <person name="Tanaka T."/>
            <person name="Ishii S."/>
            <person name="Yamamoto J."/>
            <person name="Saito K."/>
            <person name="Kawai Y."/>
            <person name="Isono Y."/>
            <person name="Nakamura Y."/>
            <person name="Nagahari K."/>
            <person name="Murakami K."/>
            <person name="Yasuda T."/>
            <person name="Iwayanagi T."/>
            <person name="Wagatsuma M."/>
            <person name="Shiratori A."/>
            <person name="Sudo H."/>
            <person name="Hosoiri T."/>
            <person name="Kaku Y."/>
            <person name="Kodaira H."/>
            <person name="Kondo H."/>
            <person name="Sugawara M."/>
            <person name="Takahashi M."/>
            <person name="Kanda K."/>
            <person name="Yokoi T."/>
            <person name="Furuya T."/>
            <person name="Kikkawa E."/>
            <person name="Omura Y."/>
            <person name="Abe K."/>
            <person name="Kamihara K."/>
            <person name="Katsuta N."/>
            <person name="Sato K."/>
            <person name="Tanikawa M."/>
            <person name="Yamazaki M."/>
            <person name="Ninomiya K."/>
            <person name="Ishibashi T."/>
            <person name="Yamashita H."/>
            <person name="Murakawa K."/>
            <person name="Fujimori K."/>
            <person name="Tanai H."/>
            <person name="Kimata M."/>
            <person name="Watanabe M."/>
            <person name="Hiraoka S."/>
            <person name="Chiba Y."/>
            <person name="Ishida S."/>
            <person name="Ono Y."/>
            <person name="Takiguchi S."/>
            <person name="Watanabe S."/>
            <person name="Yosida M."/>
            <person name="Hotuta T."/>
            <person name="Kusano J."/>
            <person name="Kanehori K."/>
            <person name="Takahashi-Fujii A."/>
            <person name="Hara H."/>
            <person name="Tanase T.-O."/>
            <person name="Nomura Y."/>
            <person name="Togiya S."/>
            <person name="Komai F."/>
            <person name="Hara R."/>
            <person name="Takeuchi K."/>
            <person name="Arita M."/>
            <person name="Imose N."/>
            <person name="Musashino K."/>
            <person name="Yuuki H."/>
            <person name="Oshima A."/>
            <person name="Sasaki N."/>
            <person name="Aotsuka S."/>
            <person name="Yoshikawa Y."/>
            <person name="Matsunawa H."/>
            <person name="Ichihara T."/>
            <person name="Shiohata N."/>
            <person name="Sano S."/>
            <person name="Moriya S."/>
            <person name="Momiyama H."/>
            <person name="Satoh N."/>
            <person name="Takami S."/>
            <person name="Terashima Y."/>
            <person name="Suzuki O."/>
            <person name="Nakagawa S."/>
            <person name="Senoh A."/>
            <person name="Mizoguchi H."/>
            <person name="Goto Y."/>
            <person name="Shimizu F."/>
            <person name="Wakebe H."/>
            <person name="Hishigaki H."/>
            <person name="Watanabe T."/>
            <person name="Sugiyama A."/>
            <person name="Takemoto M."/>
            <person name="Kawakami B."/>
            <person name="Yamazaki M."/>
            <person name="Watanabe K."/>
            <person name="Kumagai A."/>
            <person name="Itakura S."/>
            <person name="Fukuzumi Y."/>
            <person name="Fujimori Y."/>
            <person name="Komiyama M."/>
            <person name="Tashiro H."/>
            <person name="Tanigami A."/>
            <person name="Fujiwara T."/>
            <person name="Ono T."/>
            <person name="Yamada K."/>
            <person name="Fujii Y."/>
            <person name="Ozaki K."/>
            <person name="Hirao M."/>
            <person name="Ohmori Y."/>
            <person name="Kawabata A."/>
            <person name="Hikiji T."/>
            <person name="Kobatake N."/>
            <person name="Inagaki H."/>
            <person name="Ikema Y."/>
            <person name="Okamoto S."/>
            <person name="Okitani R."/>
            <person name="Kawakami T."/>
            <person name="Noguchi S."/>
            <person name="Itoh T."/>
            <person name="Shigeta K."/>
            <person name="Senba T."/>
            <person name="Matsumura K."/>
            <person name="Nakajima Y."/>
            <person name="Mizuno T."/>
            <person name="Morinaga M."/>
            <person name="Sasaki M."/>
            <person name="Togashi T."/>
            <person name="Oyama M."/>
            <person name="Hata H."/>
            <person name="Watanabe M."/>
            <person name="Komatsu T."/>
            <person name="Mizushima-Sugano J."/>
            <person name="Satoh T."/>
            <person name="Shirai Y."/>
            <person name="Takahashi Y."/>
            <person name="Nakagawa K."/>
            <person name="Okumura K."/>
            <person name="Nagase T."/>
            <person name="Nomura N."/>
            <person name="Kikuchi H."/>
            <person name="Masuho Y."/>
            <person name="Yamashita R."/>
            <person name="Nakai K."/>
            <person name="Yada T."/>
            <person name="Nakamura Y."/>
            <person name="Ohara O."/>
            <person name="Isogai T."/>
            <person name="Sugano S."/>
        </authorList>
    </citation>
    <scope>NUCLEOTIDE SEQUENCE [LARGE SCALE MRNA] (ISOFORM 3)</scope>
    <scope>VARIANT ALA-886</scope>
    <source>
        <tissue>Tongue</tissue>
    </source>
</reference>
<reference key="4">
    <citation type="journal article" date="2006" name="Nature">
        <title>Human chromosome 11 DNA sequence and analysis including novel gene identification.</title>
        <authorList>
            <person name="Taylor T.D."/>
            <person name="Noguchi H."/>
            <person name="Totoki Y."/>
            <person name="Toyoda A."/>
            <person name="Kuroki Y."/>
            <person name="Dewar K."/>
            <person name="Lloyd C."/>
            <person name="Itoh T."/>
            <person name="Takeda T."/>
            <person name="Kim D.-W."/>
            <person name="She X."/>
            <person name="Barlow K.F."/>
            <person name="Bloom T."/>
            <person name="Bruford E."/>
            <person name="Chang J.L."/>
            <person name="Cuomo C.A."/>
            <person name="Eichler E."/>
            <person name="FitzGerald M.G."/>
            <person name="Jaffe D.B."/>
            <person name="LaButti K."/>
            <person name="Nicol R."/>
            <person name="Park H.-S."/>
            <person name="Seaman C."/>
            <person name="Sougnez C."/>
            <person name="Yang X."/>
            <person name="Zimmer A.R."/>
            <person name="Zody M.C."/>
            <person name="Birren B.W."/>
            <person name="Nusbaum C."/>
            <person name="Fujiyama A."/>
            <person name="Hattori M."/>
            <person name="Rogers J."/>
            <person name="Lander E.S."/>
            <person name="Sakaki Y."/>
        </authorList>
    </citation>
    <scope>NUCLEOTIDE SEQUENCE [LARGE SCALE GENOMIC DNA]</scope>
</reference>
<reference key="5">
    <citation type="journal article" date="2004" name="Genome Res.">
        <title>The status, quality, and expansion of the NIH full-length cDNA project: the Mammalian Gene Collection (MGC).</title>
        <authorList>
            <consortium name="The MGC Project Team"/>
        </authorList>
    </citation>
    <scope>NUCLEOTIDE SEQUENCE [LARGE SCALE MRNA] (ISOFORM 5)</scope>
    <scope>NUCLEOTIDE SEQUENCE [LARGE SCALE MRNA] OF 1-1240 (ISOFORM 1)</scope>
    <scope>VARIANT ALA-886</scope>
    <source>
        <tissue>Brain</tissue>
    </source>
</reference>
<reference key="6">
    <citation type="submission" date="2003-11" db="EMBL/GenBank/DDBJ databases">
        <title>BRLZ: a leucine zipper protein expressed in brain.</title>
        <authorList>
            <person name="Rask L."/>
            <person name="Jensen N.A."/>
            <person name="Mitchelmore C."/>
        </authorList>
    </citation>
    <scope>NUCLEOTIDE SEQUENCE [MRNA] OF 960-1476 (ISOFORM 4)</scope>
</reference>
<reference key="7">
    <citation type="journal article" date="2009" name="Sci. Signal.">
        <title>Quantitative phosphoproteomic analysis of T cell receptor signaling reveals system-wide modulation of protein-protein interactions.</title>
        <authorList>
            <person name="Mayya V."/>
            <person name="Lundgren D.H."/>
            <person name="Hwang S.-I."/>
            <person name="Rezaul K."/>
            <person name="Wu L."/>
            <person name="Eng J.K."/>
            <person name="Rodionov V."/>
            <person name="Han D.K."/>
        </authorList>
    </citation>
    <scope>PHOSPHORYLATION [LARGE SCALE ANALYSIS] AT SER-436</scope>
    <scope>IDENTIFICATION BY MASS SPECTROMETRY [LARGE SCALE ANALYSIS]</scope>
    <source>
        <tissue>Leukemic T-cell</tissue>
    </source>
</reference>
<reference key="8">
    <citation type="journal article" date="2011" name="Mol. Biol. Cell">
        <title>Protective role of Gipie, a Girdin family protein, in endoplasmic reticulum stress responses in endothelial cells.</title>
        <authorList>
            <person name="Matsushita E."/>
            <person name="Asai N."/>
            <person name="Enomoto A."/>
            <person name="Kawamoto Y."/>
            <person name="Kato T."/>
            <person name="Mii S."/>
            <person name="Maeda K."/>
            <person name="Shibata R."/>
            <person name="Hattori S."/>
            <person name="Hagikura M."/>
            <person name="Takahashi K."/>
            <person name="Sokabe M."/>
            <person name="Murakumo Y."/>
            <person name="Murohara T."/>
            <person name="Takahashi M."/>
        </authorList>
    </citation>
    <scope>FUNCTION</scope>
    <scope>INTERACTION WITH HSPA5</scope>
    <scope>SUBCELLULAR LOCATION</scope>
    <scope>TISSUE SPECIFICITY</scope>
    <scope>INDUCTION BY ER STRESS</scope>
</reference>
<reference key="9">
    <citation type="journal article" date="2013" name="J. Proteome Res.">
        <title>Toward a comprehensive characterization of a human cancer cell phosphoproteome.</title>
        <authorList>
            <person name="Zhou H."/>
            <person name="Di Palma S."/>
            <person name="Preisinger C."/>
            <person name="Peng M."/>
            <person name="Polat A.N."/>
            <person name="Heck A.J."/>
            <person name="Mohammed S."/>
        </authorList>
    </citation>
    <scope>IDENTIFICATION BY MASS SPECTROMETRY [LARGE SCALE ANALYSIS]</scope>
    <source>
        <tissue>Cervix carcinoma</tissue>
    </source>
</reference>
<reference key="10">
    <citation type="journal article" date="2014" name="J. Proteomics">
        <title>An enzyme assisted RP-RPLC approach for in-depth analysis of human liver phosphoproteome.</title>
        <authorList>
            <person name="Bian Y."/>
            <person name="Song C."/>
            <person name="Cheng K."/>
            <person name="Dong M."/>
            <person name="Wang F."/>
            <person name="Huang J."/>
            <person name="Sun D."/>
            <person name="Wang L."/>
            <person name="Ye M."/>
            <person name="Zou H."/>
        </authorList>
    </citation>
    <scope>PHOSPHORYLATION [LARGE SCALE ANALYSIS] AT SER-596</scope>
    <scope>IDENTIFICATION BY MASS SPECTROMETRY [LARGE SCALE ANALYSIS]</scope>
    <source>
        <tissue>Liver</tissue>
    </source>
</reference>
<reference key="11">
    <citation type="journal article" date="2015" name="J. Immunol.">
        <title>HkRP3 is a microtubule-binding protein regulating lytic granule clustering and NK cell killing.</title>
        <authorList>
            <person name="Ham H."/>
            <person name="Huynh W."/>
            <person name="Schoon R.A."/>
            <person name="Vale R.D."/>
            <person name="Billadeau D.D."/>
        </authorList>
    </citation>
    <scope>FUNCTION</scope>
    <scope>INTERACTION WITH DOCK8 AND MICROTUBULES</scope>
    <scope>SUBCELLULAR LOCATION</scope>
    <scope>TISSUE SPECIFICITY</scope>
</reference>
<accession>A6NC98</accession>
<accession>A5D8Y5</accession>
<accession>B5MDM2</accession>
<accession>Q05BL2</accession>
<accession>Q6RUV3</accession>
<accession>Q8N1Q6</accession>
<accession>Q8NF44</accession>
<accession>Q9H0H1</accession>
<gene>
    <name type="primary">CCDC88B</name>
    <name type="synonym">BRLZ</name>
</gene>
<keyword id="KW-0025">Alternative splicing</keyword>
<keyword id="KW-0175">Coiled coil</keyword>
<keyword id="KW-0963">Cytoplasm</keyword>
<keyword id="KW-0206">Cytoskeleton</keyword>
<keyword id="KW-0256">Endoplasmic reticulum</keyword>
<keyword id="KW-0333">Golgi apparatus</keyword>
<keyword id="KW-0472">Membrane</keyword>
<keyword id="KW-0597">Phosphoprotein</keyword>
<keyword id="KW-1267">Proteomics identification</keyword>
<keyword id="KW-1185">Reference proteome</keyword>
<keyword id="KW-0346">Stress response</keyword>
<dbReference type="EMBL" id="AL136799">
    <property type="protein sequence ID" value="CAB66733.2"/>
    <property type="molecule type" value="mRNA"/>
</dbReference>
<dbReference type="EMBL" id="AK090436">
    <property type="protein sequence ID" value="BAC03417.1"/>
    <property type="status" value="ALT_INIT"/>
    <property type="molecule type" value="mRNA"/>
</dbReference>
<dbReference type="EMBL" id="AK095289">
    <property type="status" value="NOT_ANNOTATED_CDS"/>
    <property type="molecule type" value="mRNA"/>
</dbReference>
<dbReference type="EMBL" id="AP003774">
    <property type="status" value="NOT_ANNOTATED_CDS"/>
    <property type="molecule type" value="Genomic_DNA"/>
</dbReference>
<dbReference type="EMBL" id="BC040232">
    <property type="protein sequence ID" value="AAH40232.1"/>
    <property type="molecule type" value="mRNA"/>
</dbReference>
<dbReference type="EMBL" id="BC141866">
    <property type="protein sequence ID" value="AAI41867.1"/>
    <property type="molecule type" value="mRNA"/>
</dbReference>
<dbReference type="EMBL" id="AY491401">
    <property type="protein sequence ID" value="AAR83719.1"/>
    <property type="molecule type" value="mRNA"/>
</dbReference>
<dbReference type="CCDS" id="CCDS8072.2">
    <molecule id="A6NC98-1"/>
</dbReference>
<dbReference type="RefSeq" id="NP_115627.6">
    <molecule id="A6NC98-1"/>
    <property type="nucleotide sequence ID" value="NM_032251.5"/>
</dbReference>
<dbReference type="SMR" id="A6NC98"/>
<dbReference type="BioGRID" id="129505">
    <property type="interactions" value="43"/>
</dbReference>
<dbReference type="FunCoup" id="A6NC98">
    <property type="interactions" value="313"/>
</dbReference>
<dbReference type="IntAct" id="A6NC98">
    <property type="interactions" value="44"/>
</dbReference>
<dbReference type="MINT" id="A6NC98"/>
<dbReference type="STRING" id="9606.ENSP00000349238"/>
<dbReference type="GlyGen" id="A6NC98">
    <property type="glycosylation" value="1 site, 1 O-linked glycan (1 site)"/>
</dbReference>
<dbReference type="iPTMnet" id="A6NC98"/>
<dbReference type="PhosphoSitePlus" id="A6NC98"/>
<dbReference type="BioMuta" id="CCDC88B"/>
<dbReference type="jPOST" id="A6NC98"/>
<dbReference type="MassIVE" id="A6NC98"/>
<dbReference type="PaxDb" id="9606-ENSP00000349238"/>
<dbReference type="PeptideAtlas" id="A6NC98"/>
<dbReference type="ProteomicsDB" id="811">
    <molecule id="A6NC98-1"/>
</dbReference>
<dbReference type="ProteomicsDB" id="812">
    <molecule id="A6NC98-2"/>
</dbReference>
<dbReference type="ProteomicsDB" id="813">
    <molecule id="A6NC98-3"/>
</dbReference>
<dbReference type="ProteomicsDB" id="814">
    <molecule id="A6NC98-4"/>
</dbReference>
<dbReference type="ProteomicsDB" id="815">
    <molecule id="A6NC98-5"/>
</dbReference>
<dbReference type="ProteomicsDB" id="816">
    <molecule id="A6NC98-6"/>
</dbReference>
<dbReference type="Pumba" id="A6NC98"/>
<dbReference type="Antibodypedia" id="15381">
    <property type="antibodies" value="49 antibodies from 10 providers"/>
</dbReference>
<dbReference type="DNASU" id="283234"/>
<dbReference type="Ensembl" id="ENST00000301897.5">
    <molecule id="A6NC98-6"/>
    <property type="protein sequence ID" value="ENSP00000301897.4"/>
    <property type="gene ID" value="ENSG00000168071.22"/>
</dbReference>
<dbReference type="Ensembl" id="ENST00000356786.10">
    <molecule id="A6NC98-1"/>
    <property type="protein sequence ID" value="ENSP00000349238.5"/>
    <property type="gene ID" value="ENSG00000168071.22"/>
</dbReference>
<dbReference type="GeneID" id="283234"/>
<dbReference type="KEGG" id="hsa:283234"/>
<dbReference type="MANE-Select" id="ENST00000356786.10">
    <property type="protein sequence ID" value="ENSP00000349238.5"/>
    <property type="RefSeq nucleotide sequence ID" value="NM_032251.6"/>
    <property type="RefSeq protein sequence ID" value="NP_115627.6"/>
</dbReference>
<dbReference type="UCSC" id="uc001nzy.4">
    <molecule id="A6NC98-1"/>
    <property type="organism name" value="human"/>
</dbReference>
<dbReference type="AGR" id="HGNC:26757"/>
<dbReference type="CTD" id="283234"/>
<dbReference type="DisGeNET" id="283234"/>
<dbReference type="GeneCards" id="CCDC88B"/>
<dbReference type="HGNC" id="HGNC:26757">
    <property type="gene designation" value="CCDC88B"/>
</dbReference>
<dbReference type="HPA" id="ENSG00000168071">
    <property type="expression patterns" value="Tissue enhanced (brain, lymphoid tissue)"/>
</dbReference>
<dbReference type="MIM" id="611205">
    <property type="type" value="gene"/>
</dbReference>
<dbReference type="neXtProt" id="NX_A6NC98"/>
<dbReference type="OpenTargets" id="ENSG00000168071"/>
<dbReference type="PharmGKB" id="PA162381820"/>
<dbReference type="VEuPathDB" id="HostDB:ENSG00000168071"/>
<dbReference type="eggNOG" id="KOG4643">
    <property type="taxonomic scope" value="Eukaryota"/>
</dbReference>
<dbReference type="GeneTree" id="ENSGT00940000162048"/>
<dbReference type="HOGENOM" id="CLU_002567_1_0_1"/>
<dbReference type="InParanoid" id="A6NC98"/>
<dbReference type="OMA" id="IMRSDMM"/>
<dbReference type="OrthoDB" id="10254988at2759"/>
<dbReference type="PAN-GO" id="A6NC98">
    <property type="GO annotations" value="6 GO annotations based on evolutionary models"/>
</dbReference>
<dbReference type="PhylomeDB" id="A6NC98"/>
<dbReference type="TreeFam" id="TF320231"/>
<dbReference type="PathwayCommons" id="A6NC98"/>
<dbReference type="SignaLink" id="A6NC98"/>
<dbReference type="BioGRID-ORCS" id="283234">
    <property type="hits" value="27 hits in 1159 CRISPR screens"/>
</dbReference>
<dbReference type="ChiTaRS" id="CCDC88B">
    <property type="organism name" value="human"/>
</dbReference>
<dbReference type="GenomeRNAi" id="283234"/>
<dbReference type="Pharos" id="A6NC98">
    <property type="development level" value="Tbio"/>
</dbReference>
<dbReference type="PRO" id="PR:A6NC98"/>
<dbReference type="Proteomes" id="UP000005640">
    <property type="component" value="Chromosome 11"/>
</dbReference>
<dbReference type="RNAct" id="A6NC98">
    <property type="molecule type" value="protein"/>
</dbReference>
<dbReference type="Bgee" id="ENSG00000168071">
    <property type="expression patterns" value="Expressed in granulocyte and 99 other cell types or tissues"/>
</dbReference>
<dbReference type="ExpressionAtlas" id="A6NC98">
    <property type="expression patterns" value="baseline and differential"/>
</dbReference>
<dbReference type="GO" id="GO:0005813">
    <property type="term" value="C:centrosome"/>
    <property type="evidence" value="ECO:0000314"/>
    <property type="project" value="HPA"/>
</dbReference>
<dbReference type="GO" id="GO:0005737">
    <property type="term" value="C:cytoplasm"/>
    <property type="evidence" value="ECO:0000318"/>
    <property type="project" value="GO_Central"/>
</dbReference>
<dbReference type="GO" id="GO:0005829">
    <property type="term" value="C:cytosol"/>
    <property type="evidence" value="ECO:0000314"/>
    <property type="project" value="HPA"/>
</dbReference>
<dbReference type="GO" id="GO:0005783">
    <property type="term" value="C:endoplasmic reticulum"/>
    <property type="evidence" value="ECO:0007669"/>
    <property type="project" value="UniProtKB-SubCell"/>
</dbReference>
<dbReference type="GO" id="GO:0005794">
    <property type="term" value="C:Golgi apparatus"/>
    <property type="evidence" value="ECO:0007669"/>
    <property type="project" value="UniProtKB-SubCell"/>
</dbReference>
<dbReference type="GO" id="GO:0016020">
    <property type="term" value="C:membrane"/>
    <property type="evidence" value="ECO:0007005"/>
    <property type="project" value="UniProtKB"/>
</dbReference>
<dbReference type="GO" id="GO:0005654">
    <property type="term" value="C:nucleoplasm"/>
    <property type="evidence" value="ECO:0000314"/>
    <property type="project" value="HPA"/>
</dbReference>
<dbReference type="GO" id="GO:0051959">
    <property type="term" value="F:dynein light intermediate chain binding"/>
    <property type="evidence" value="ECO:0000318"/>
    <property type="project" value="GO_Central"/>
</dbReference>
<dbReference type="GO" id="GO:0008017">
    <property type="term" value="F:microtubule binding"/>
    <property type="evidence" value="ECO:0000318"/>
    <property type="project" value="GO_Central"/>
</dbReference>
<dbReference type="GO" id="GO:0031122">
    <property type="term" value="P:cytoplasmic microtubule organization"/>
    <property type="evidence" value="ECO:0000318"/>
    <property type="project" value="GO_Central"/>
</dbReference>
<dbReference type="GO" id="GO:0030705">
    <property type="term" value="P:cytoskeleton-dependent intracellular transport"/>
    <property type="evidence" value="ECO:0000318"/>
    <property type="project" value="GO_Central"/>
</dbReference>
<dbReference type="GO" id="GO:0042832">
    <property type="term" value="P:defense response to protozoan"/>
    <property type="evidence" value="ECO:0007669"/>
    <property type="project" value="Ensembl"/>
</dbReference>
<dbReference type="GO" id="GO:0001819">
    <property type="term" value="P:positive regulation of cytokine production"/>
    <property type="evidence" value="ECO:0000250"/>
    <property type="project" value="UniProtKB"/>
</dbReference>
<dbReference type="GO" id="GO:0050870">
    <property type="term" value="P:positive regulation of T cell activation"/>
    <property type="evidence" value="ECO:0000250"/>
    <property type="project" value="UniProtKB"/>
</dbReference>
<dbReference type="GO" id="GO:0042102">
    <property type="term" value="P:positive regulation of T cell proliferation"/>
    <property type="evidence" value="ECO:0000250"/>
    <property type="project" value="UniProtKB"/>
</dbReference>
<dbReference type="CDD" id="cd22230">
    <property type="entry name" value="HkD_Gipie"/>
    <property type="match status" value="1"/>
</dbReference>
<dbReference type="FunFam" id="1.10.418.10:FF:000076">
    <property type="entry name" value="Coiled-coil domain containing 88B"/>
    <property type="match status" value="1"/>
</dbReference>
<dbReference type="Gene3D" id="1.10.418.10">
    <property type="entry name" value="Calponin-like domain"/>
    <property type="match status" value="1"/>
</dbReference>
<dbReference type="InterPro" id="IPR036872">
    <property type="entry name" value="CH_dom_sf"/>
</dbReference>
<dbReference type="InterPro" id="IPR043936">
    <property type="entry name" value="HOOK_N"/>
</dbReference>
<dbReference type="PANTHER" id="PTHR18947:SF35">
    <property type="entry name" value="COILED-COIL DOMAIN-CONTAINING PROTEIN 88B"/>
    <property type="match status" value="1"/>
</dbReference>
<dbReference type="PANTHER" id="PTHR18947">
    <property type="entry name" value="HOOK PROTEINS"/>
    <property type="match status" value="1"/>
</dbReference>
<dbReference type="Pfam" id="PF19047">
    <property type="entry name" value="HOOK_N"/>
    <property type="match status" value="1"/>
</dbReference>
<dbReference type="SUPFAM" id="SSF116907">
    <property type="entry name" value="Hook domain"/>
    <property type="match status" value="1"/>
</dbReference>
<organism>
    <name type="scientific">Homo sapiens</name>
    <name type="common">Human</name>
    <dbReference type="NCBI Taxonomy" id="9606"/>
    <lineage>
        <taxon>Eukaryota</taxon>
        <taxon>Metazoa</taxon>
        <taxon>Chordata</taxon>
        <taxon>Craniata</taxon>
        <taxon>Vertebrata</taxon>
        <taxon>Euteleostomi</taxon>
        <taxon>Mammalia</taxon>
        <taxon>Eutheria</taxon>
        <taxon>Euarchontoglires</taxon>
        <taxon>Primates</taxon>
        <taxon>Haplorrhini</taxon>
        <taxon>Catarrhini</taxon>
        <taxon>Hominidae</taxon>
        <taxon>Homo</taxon>
    </lineage>
</organism>
<feature type="chain" id="PRO_0000317454" description="Coiled-coil domain-containing protein 88B">
    <location>
        <begin position="1"/>
        <end position="1476"/>
    </location>
</feature>
<feature type="region of interest" description="Disordered" evidence="3">
    <location>
        <begin position="427"/>
        <end position="451"/>
    </location>
</feature>
<feature type="region of interest" description="Disordered" evidence="3">
    <location>
        <begin position="509"/>
        <end position="706"/>
    </location>
</feature>
<feature type="region of interest" description="Disordered" evidence="3">
    <location>
        <begin position="825"/>
        <end position="866"/>
    </location>
</feature>
<feature type="region of interest" description="Disordered" evidence="3">
    <location>
        <begin position="1323"/>
        <end position="1476"/>
    </location>
</feature>
<feature type="coiled-coil region" evidence="2">
    <location>
        <begin position="253"/>
        <end position="481"/>
    </location>
</feature>
<feature type="coiled-coil region" evidence="2">
    <location>
        <begin position="720"/>
        <end position="1303"/>
    </location>
</feature>
<feature type="compositionally biased region" description="Polar residues" evidence="3">
    <location>
        <begin position="572"/>
        <end position="586"/>
    </location>
</feature>
<feature type="compositionally biased region" description="Basic and acidic residues" evidence="3">
    <location>
        <begin position="678"/>
        <end position="690"/>
    </location>
</feature>
<feature type="compositionally biased region" description="Basic and acidic residues" evidence="3">
    <location>
        <begin position="825"/>
        <end position="834"/>
    </location>
</feature>
<feature type="compositionally biased region" description="Basic and acidic residues" evidence="3">
    <location>
        <begin position="842"/>
        <end position="866"/>
    </location>
</feature>
<feature type="compositionally biased region" description="Basic and acidic residues" evidence="3">
    <location>
        <begin position="1448"/>
        <end position="1469"/>
    </location>
</feature>
<feature type="modified residue" description="Phosphoserine" evidence="17">
    <location>
        <position position="436"/>
    </location>
</feature>
<feature type="modified residue" description="Phosphoserine" evidence="18">
    <location>
        <position position="596"/>
    </location>
</feature>
<feature type="modified residue" description="Phosphoserine" evidence="1">
    <location>
        <position position="1348"/>
    </location>
</feature>
<feature type="modified residue" description="Phosphoserine" evidence="1">
    <location>
        <position position="1379"/>
    </location>
</feature>
<feature type="splice variant" id="VSP_035405" description="In isoform 6." evidence="9">
    <location>
        <begin position="1"/>
        <end position="1337"/>
    </location>
</feature>
<feature type="splice variant" id="VSP_030956" description="In isoform 5." evidence="12">
    <location>
        <begin position="1"/>
        <end position="864"/>
    </location>
</feature>
<feature type="splice variant" id="VSP_030957" description="In isoform 3." evidence="11">
    <location>
        <begin position="1"/>
        <end position="351"/>
    </location>
</feature>
<feature type="splice variant" id="VSP_030958" description="In isoform 3." evidence="11">
    <original>QLEEERVLSGVLEASKALLEEQLEAARERCARLHETQRENLLLRTRLGEAHA</original>
    <variation>MGGAGALGGAGGVQGAAGRAAGGCPRALRPAARDPAREPAAANPAGRGPCGK</variation>
    <location>
        <begin position="352"/>
        <end position="403"/>
    </location>
</feature>
<feature type="splice variant" id="VSP_030959" description="In isoform 5." evidence="12">
    <original>REKEALQA</original>
    <variation>MKNRGLRE</variation>
    <location>
        <begin position="865"/>
        <end position="872"/>
    </location>
</feature>
<feature type="splice variant" id="VSP_030960" description="In isoform 3." evidence="11">
    <original>LRQGPAGLGPKKRAEPQL</original>
    <variation>VMPARLGAGGHATLPSIP</variation>
    <location>
        <begin position="955"/>
        <end position="972"/>
    </location>
</feature>
<feature type="splice variant" id="VSP_030961" description="In isoform 3." evidence="11">
    <location>
        <begin position="973"/>
        <end position="1476"/>
    </location>
</feature>
<feature type="splice variant" id="VSP_030962" description="In isoform 2." evidence="10">
    <original>NAMLVAEKAALQGQLQHLEGQLGSLQGRAQELLLQSQRAQEHSSRLQA</original>
    <variation>VSVGPQWALGRCPVQCECGSTVDPGLGGIPCSVSVDSQWARGWGCPMQ</variation>
    <location>
        <begin position="987"/>
        <end position="1034"/>
    </location>
</feature>
<feature type="splice variant" id="VSP_030963" description="In isoform 4." evidence="15">
    <location>
        <begin position="1019"/>
        <end position="1136"/>
    </location>
</feature>
<feature type="splice variant" id="VSP_030964" description="In isoform 2." evidence="10">
    <location>
        <begin position="1035"/>
        <end position="1476"/>
    </location>
</feature>
<feature type="splice variant" id="VSP_030965" description="In isoform 5." evidence="12">
    <original>VKRLMRPRREGGPPGGLRLGADGAGSTESLGGPPETELPEGREADGTGSPSPAPMRRAQSSLCLRDETLAGGQRRKLSSRFPVGRSSESFSPGDTPRQRFRQRHPGPLGAPVSHSKGPGVGWENSAETLQEHETDANREGPEVQEPEKRPLTPSLSQ</original>
    <variation>GPLPRHPCAGPRAPSACGMRPWQAGSGGNSAQGSRWGEALSHSALGTPLGNDSDSAIQAPWGRPSPTAKDLVWDGRTPLRPCRNTKQMPTERALRYRNRRNVPSPHPSASDTVGTAGLGVQPSRHWSVSGGPRQPKSSGSQGPQGESLDKEAWALRSSTVSAGARRWSWDECVDRGDGWPPRAAPGWSSGSSRWLPLRQRSLGDPPAEGGWQELAREPPALSRWEAESQCWGTVAWADLEP</variation>
    <location>
        <begin position="1320"/>
        <end position="1476"/>
    </location>
</feature>
<feature type="splice variant" id="VSP_035406" description="In isoform 6." evidence="9">
    <original>LGADGAGSTESLGGPPETELPEGREADGTG</original>
    <variation>MPCAARSRSSWRRSWTNTACWSLCPCPGPR</variation>
    <location>
        <begin position="1338"/>
        <end position="1367"/>
    </location>
</feature>
<feature type="sequence variant" id="VAR_038523" description="In dbSNP:rs647152.">
    <original>D</original>
    <variation>E</variation>
    <location>
        <position position="193"/>
    </location>
</feature>
<feature type="sequence variant" id="VAR_038524" description="In dbSNP:rs685870.">
    <original>W</original>
    <variation>R</variation>
    <location>
        <position position="639"/>
    </location>
</feature>
<feature type="sequence variant" id="VAR_038525" description="In dbSNP:rs1318165." evidence="4 5 6">
    <original>D</original>
    <variation>A</variation>
    <location>
        <position position="886"/>
    </location>
</feature>
<feature type="sequence conflict" description="In Ref. 1; BAC03417." evidence="16" ref="1">
    <original>L</original>
    <variation>W</variation>
    <location>
        <position position="291"/>
    </location>
</feature>
<feature type="sequence conflict" description="In Ref. 5; AAI41867." evidence="16" ref="5">
    <original>T</original>
    <variation>I</variation>
    <location>
        <position position="943"/>
    </location>
</feature>
<sequence length="1476" mass="164809">MEGGKGPRLRDFLSGSLATWALGLAGLVGEAEDSEGEEEEEEEEPPLWLEKRFLRLSDGALLLRVLGIIAPSSRGGPRMLRGLDGPAAWRVWNLNHLWGRLRDFYQEELQLLILSPPPDLQTLGFDPLSEEAVEQLEGVLRLLLGASVQCEHRELFIRHIQGLSLEVQSELAAAIQEVTQPGAGVVLALSGPDPGELAPAELEMLSRSLMGTLSKLARERDLGAQRLAELLLEREPLCLRPEAPSRAPAEGPSHHLALQLANAKAQLRRLRQELEEKAELLLDSQAEVQGLEAEIRRLRQEAQALSGQAKRAELYREEAEALRERAGRLPRLQEELRRCRERLQAAEAYKSQLEEERVLSGVLEASKALLEEQLEAARERCARLHETQRENLLLRTRLGEAHAELDSLRHQVDQLAEENVELELELQRSLEPPPGSPGEAPLAGAAPSLQDEVREAEAGRLRTLERENRELRGLLQVLQGQPGGQHPLLEAPREDPVLPVLEEAPQTPVAFDHSPQGLVQKARDGGPQALDLAPPALDSVLEASAECPQAPDSDPQEAESPLQAAAMDPQASDWSPQESGSPVETQESPEKAGRRSSLQSPASVAPPQGPGTKIQAPQLLGGETEGREAPQGELVPEAWGLRQEGPEHKPGPSEPSSVQLEEQEGPNQGLDLATGQAEAREHDQRLEGTVRDPAWQKPQQKSEGALEVQVWEGPIPGESLASGVAEQEALREEVAQLRRKAEALGDELEAQARKLEAQNTEAARLSKELAQARRAEAEAHREAEAQAWEQARLREAVEAAGQELESASQEREALVEALAAAGRERRQWEREGSRLRAQSEAAEERMQVLESEGRQHLEEAERERREKEALQAELEKAVVRGKELGDRLEHLQRELEQAALERQEFLREKESQHQRYQGLEQRLEAELQAAATSKEEALMELKTRALQLEEELFQLRQGPAGLGPKKRAEPQLVETQNVRLIEVERSNAMLVAEKAALQGQLQHLEGQLGSLQGRAQELLLQSQRAQEHSSRLQAEKSVLEIQGQELHRKLEVLEEEVRAARQSQEETRGQQQALLRDHKALAQLQRRQEAELEGLLVRHRDLKANMRALELAHRELQGRHEQLQAQRASVEAQEVALLAERERLMQDGHRQRGLEEELRRLQSEHDRAQMLLAELSRERGELQGERGELRGRLARLELERAQLEMQSQQLRESNQQLDLSACRLTTQCELLTQLRSAQEEENRQLLAEVQALSRENRELLERSLESRDHLHREQREYLDQLNALRREKQKLVEKIMDQYRVLEPVPLPRTKKGSWLADKVKRLMRPRREGGPPGGLRLGADGAGSTESLGGPPETELPEGREADGTGSPSPAPMRRAQSSLCLRDETLAGGQRRKLSSRFPVGRSSESFSPGDTPRQRFRQRHPGPLGAPVSHSKGPGVGWENSAETLQEHETDANREGPEVQEPEKRPLTPSLSQ</sequence>
<name>CC88B_HUMAN</name>
<comment type="function">
    <text evidence="1 7 8">Acts as a positive regulator of T-cell maturation and inflammatory function. Required for several functions of T-cells, in both the CD4(+) and the CD8(+) compartments and this includes expression of cell surface markers of activation, proliferation, and cytokine production in response to specific or non-specific stimulation (By similarity). Enhances NK cell cytotoxicity by positively regulating polarization of microtubule-organizing center (MTOC) to cytotoxic synapse, lytic granule transport along microtubules, and dynein-mediated clustering to MTOC (PubMed:25762780). Interacts with HSPA5 and stabilizes the interaction between HSPA5 and ERN1, leading to suppression of ERN1-induced JNK activation and endoplasmic reticulum stress-induced apoptosis (PubMed:21289099).</text>
</comment>
<comment type="subunit">
    <text evidence="1 7 8">Homodimer (PubMed:25762780). Interacts with DOCK8 (PubMed:25762780). Interacts (via C-terminus) with intact microtubules (PubMed:25762780). Interacts with dynein-dynactin motor complex (PubMed:25762780). Interacts (via C-terminus) with HSPA5 (PubMed:21289099).</text>
</comment>
<comment type="interaction">
    <interactant intactId="EBI-347573">
        <id>A6NC98</id>
    </interactant>
    <interactant intactId="EBI-8643161">
        <id>Q9NX04</id>
        <label>AIRIM</label>
    </interactant>
    <organismsDiffer>false</organismsDiffer>
    <experiments>3</experiments>
</comment>
<comment type="interaction">
    <interactant intactId="EBI-347573">
        <id>A6NC98</id>
    </interactant>
    <interactant intactId="EBI-745073">
        <id>Q9BXY8</id>
        <label>BEX2</label>
    </interactant>
    <organismsDiffer>false</organismsDiffer>
    <experiments>3</experiments>
</comment>
<comment type="interaction">
    <interactant intactId="EBI-347573">
        <id>A6NC98</id>
    </interactant>
    <interactant intactId="EBI-11530605">
        <id>Q9H257-2</id>
        <label>CARD9</label>
    </interactant>
    <organismsDiffer>false</organismsDiffer>
    <experiments>3</experiments>
</comment>
<comment type="interaction">
    <interactant intactId="EBI-347573">
        <id>A6NC98</id>
    </interactant>
    <interactant intactId="EBI-10175300">
        <id>Q8TD31-3</id>
        <label>CCHCR1</label>
    </interactant>
    <organismsDiffer>false</organismsDiffer>
    <experiments>3</experiments>
</comment>
<comment type="interaction">
    <interactant intactId="EBI-347573">
        <id>A6NC98</id>
    </interactant>
    <interactant intactId="EBI-746238">
        <id>Q07002</id>
        <label>CDK18</label>
    </interactant>
    <organismsDiffer>false</organismsDiffer>
    <experiments>3</experiments>
</comment>
<comment type="interaction">
    <interactant intactId="EBI-347573">
        <id>A6NC98</id>
    </interactant>
    <interactant intactId="EBI-5453285">
        <id>Q2TBE0</id>
        <label>CWF19L2</label>
    </interactant>
    <organismsDiffer>false</organismsDiffer>
    <experiments>3</experiments>
</comment>
<comment type="interaction">
    <interactant intactId="EBI-347573">
        <id>A6NC98</id>
    </interactant>
    <interactant intactId="EBI-745369">
        <id>Q9H4E7</id>
        <label>DEF6</label>
    </interactant>
    <organismsDiffer>false</organismsDiffer>
    <experiments>3</experiments>
</comment>
<comment type="interaction">
    <interactant intactId="EBI-347573">
        <id>A6NC98</id>
    </interactant>
    <interactant intactId="EBI-11984733">
        <id>O60941-5</id>
        <label>DTNB</label>
    </interactant>
    <organismsDiffer>false</organismsDiffer>
    <experiments>3</experiments>
</comment>
<comment type="interaction">
    <interactant intactId="EBI-347573">
        <id>A6NC98</id>
    </interactant>
    <interactant intactId="EBI-371876">
        <id>Q9NQT4</id>
        <label>EXOSC5</label>
    </interactant>
    <organismsDiffer>false</organismsDiffer>
    <experiments>3</experiments>
</comment>
<comment type="interaction">
    <interactant intactId="EBI-347573">
        <id>A6NC98</id>
    </interactant>
    <interactant intactId="EBI-719941">
        <id>Q3B820</id>
        <label>FAM161A</label>
    </interactant>
    <organismsDiffer>false</organismsDiffer>
    <experiments>3</experiments>
</comment>
<comment type="interaction">
    <interactant intactId="EBI-347573">
        <id>A6NC98</id>
    </interactant>
    <interactant intactId="EBI-7225287">
        <id>Q96MY7</id>
        <label>FAM161B</label>
    </interactant>
    <organismsDiffer>false</organismsDiffer>
    <experiments>3</experiments>
</comment>
<comment type="interaction">
    <interactant intactId="EBI-347573">
        <id>A6NC98</id>
    </interactant>
    <interactant intactId="EBI-744104">
        <id>P55040</id>
        <label>GEM</label>
    </interactant>
    <organismsDiffer>false</organismsDiffer>
    <experiments>3</experiments>
</comment>
<comment type="interaction">
    <interactant intactId="EBI-347573">
        <id>A6NC98</id>
    </interactant>
    <interactant intactId="EBI-9834454">
        <id>P08631-2</id>
        <label>HCK</label>
    </interactant>
    <organismsDiffer>false</organismsDiffer>
    <experiments>3</experiments>
</comment>
<comment type="interaction">
    <interactant intactId="EBI-347573">
        <id>A6NC98</id>
    </interactant>
    <interactant intactId="EBI-3893317">
        <id>P09067</id>
        <label>HOXB5</label>
    </interactant>
    <organismsDiffer>false</organismsDiffer>
    <experiments>3</experiments>
</comment>
<comment type="interaction">
    <interactant intactId="EBI-347573">
        <id>A6NC98</id>
    </interactant>
    <interactant intactId="EBI-752007">
        <id>Q96AA8</id>
        <label>JAKMIP2</label>
    </interactant>
    <organismsDiffer>false</organismsDiffer>
    <experiments>3</experiments>
</comment>
<comment type="interaction">
    <interactant intactId="EBI-347573">
        <id>A6NC98</id>
    </interactant>
    <interactant intactId="EBI-2556193">
        <id>Q63ZY3</id>
        <label>KANK2</label>
    </interactant>
    <organismsDiffer>false</organismsDiffer>
    <experiments>3</experiments>
</comment>
<comment type="interaction">
    <interactant intactId="EBI-347573">
        <id>A6NC98</id>
    </interactant>
    <interactant intactId="EBI-968218">
        <id>P20700</id>
        <label>LMNB1</label>
    </interactant>
    <organismsDiffer>false</organismsDiffer>
    <experiments>3</experiments>
</comment>
<comment type="interaction">
    <interactant intactId="EBI-347573">
        <id>A6NC98</id>
    </interactant>
    <interactant intactId="EBI-2830427">
        <id>Q03252</id>
        <label>LMNB2</label>
    </interactant>
    <organismsDiffer>false</organismsDiffer>
    <experiments>3</experiments>
</comment>
<comment type="interaction">
    <interactant intactId="EBI-347573">
        <id>A6NC98</id>
    </interactant>
    <interactant intactId="EBI-8639312">
        <id>P25800</id>
        <label>LMO1</label>
    </interactant>
    <organismsDiffer>false</organismsDiffer>
    <experiments>3</experiments>
</comment>
<comment type="interaction">
    <interactant intactId="EBI-347573">
        <id>A6NC98</id>
    </interactant>
    <interactant intactId="EBI-739832">
        <id>Q8TBB1</id>
        <label>LNX1</label>
    </interactant>
    <organismsDiffer>false</organismsDiffer>
    <experiments>3</experiments>
</comment>
<comment type="interaction">
    <interactant intactId="EBI-347573">
        <id>A6NC98</id>
    </interactant>
    <interactant intactId="EBI-744782">
        <id>Q9Y5B8</id>
        <label>NME7</label>
    </interactant>
    <organismsDiffer>false</organismsDiffer>
    <experiments>3</experiments>
</comment>
<comment type="interaction">
    <interactant intactId="EBI-347573">
        <id>A6NC98</id>
    </interactant>
    <interactant intactId="EBI-714158">
        <id>Q13526</id>
        <label>PIN1</label>
    </interactant>
    <organismsDiffer>false</organismsDiffer>
    <experiments>3</experiments>
</comment>
<comment type="interaction">
    <interactant intactId="EBI-347573">
        <id>A6NC98</id>
    </interactant>
    <interactant intactId="EBI-2557469">
        <id>Q6NYC8</id>
        <label>PPP1R18</label>
    </interactant>
    <organismsDiffer>false</organismsDiffer>
    <experiments>3</experiments>
</comment>
<comment type="interaction">
    <interactant intactId="EBI-347573">
        <id>A6NC98</id>
    </interactant>
    <interactant intactId="EBI-749285">
        <id>Q15311</id>
        <label>RALBP1</label>
    </interactant>
    <organismsDiffer>false</organismsDiffer>
    <experiments>3</experiments>
</comment>
<comment type="interaction">
    <interactant intactId="EBI-347573">
        <id>A6NC98</id>
    </interactant>
    <interactant intactId="EBI-746903">
        <id>Q9Y580</id>
        <label>RBM7</label>
    </interactant>
    <organismsDiffer>false</organismsDiffer>
    <experiments>3</experiments>
</comment>
<comment type="interaction">
    <interactant intactId="EBI-347573">
        <id>A6NC98</id>
    </interactant>
    <interactant intactId="EBI-726876">
        <id>Q6NUQ1</id>
        <label>RINT1</label>
    </interactant>
    <organismsDiffer>false</organismsDiffer>
    <experiments>3</experiments>
</comment>
<comment type="interaction">
    <interactant intactId="EBI-347573">
        <id>A6NC98</id>
    </interactant>
    <interactant intactId="EBI-747035">
        <id>Q9H788</id>
        <label>SH2D4A</label>
    </interactant>
    <organismsDiffer>false</organismsDiffer>
    <experiments>3</experiments>
</comment>
<comment type="interaction">
    <interactant intactId="EBI-347573">
        <id>A6NC98</id>
    </interactant>
    <interactant intactId="EBI-346595">
        <id>Q96B97</id>
        <label>SH3KBP1</label>
    </interactant>
    <organismsDiffer>false</organismsDiffer>
    <experiments>3</experiments>
</comment>
<comment type="interaction">
    <interactant intactId="EBI-347573">
        <id>A6NC98</id>
    </interactant>
    <interactant intactId="EBI-8787464">
        <id>Q9NU19</id>
        <label>TBC1D22B</label>
    </interactant>
    <organismsDiffer>false</organismsDiffer>
    <experiments>3</experiments>
</comment>
<comment type="interaction">
    <interactant intactId="EBI-347573">
        <id>A6NC98</id>
    </interactant>
    <interactant intactId="EBI-765817">
        <id>Q9Y228</id>
        <label>TRAF3IP3</label>
    </interactant>
    <organismsDiffer>false</organismsDiffer>
    <experiments>3</experiments>
</comment>
<comment type="interaction">
    <interactant intactId="EBI-347573">
        <id>A6NC98</id>
    </interactant>
    <interactant intactId="EBI-346882">
        <id>Q99816</id>
        <label>TSG101</label>
    </interactant>
    <organismsDiffer>false</organismsDiffer>
    <experiments>3</experiments>
</comment>
<comment type="interaction">
    <interactant intactId="EBI-347573">
        <id>A6NC98</id>
    </interactant>
    <interactant intactId="EBI-744794">
        <id>Q9BZW7</id>
        <label>TSGA10</label>
    </interactant>
    <organismsDiffer>false</organismsDiffer>
    <experiments>3</experiments>
</comment>
<comment type="interaction">
    <interactant intactId="EBI-347573">
        <id>A6NC98</id>
    </interactant>
    <interactant intactId="EBI-10241197">
        <id>Q3SY00</id>
        <label>TSGA10IP</label>
    </interactant>
    <organismsDiffer>false</organismsDiffer>
    <experiments>3</experiments>
</comment>
<comment type="interaction">
    <interactant intactId="EBI-347573">
        <id>A6NC98</id>
    </interactant>
    <interactant intactId="EBI-10687282">
        <id>Q9NRE2</id>
        <label>TSHZ2</label>
    </interactant>
    <organismsDiffer>false</organismsDiffer>
    <experiments>3</experiments>
</comment>
<comment type="interaction">
    <interactant intactId="EBI-347573">
        <id>A6NC98</id>
    </interactant>
    <interactant intactId="EBI-6116822">
        <id>Q8N3L3</id>
        <label>TXLNB</label>
    </interactant>
    <organismsDiffer>false</organismsDiffer>
    <experiments>3</experiments>
</comment>
<comment type="interaction">
    <interactant intactId="EBI-347573">
        <id>A6NC98</id>
    </interactant>
    <interactant intactId="EBI-743272">
        <id>O75604</id>
        <label>USP2</label>
    </interactant>
    <organismsDiffer>false</organismsDiffer>
    <experiments>3</experiments>
</comment>
<comment type="interaction">
    <interactant intactId="EBI-347573">
        <id>A6NC98</id>
    </interactant>
    <interactant intactId="EBI-14104088">
        <id>Q53FD0-2</id>
        <label>ZC2HC1C</label>
    </interactant>
    <organismsDiffer>false</organismsDiffer>
    <experiments>3</experiments>
</comment>
<comment type="subcellular location">
    <subcellularLocation>
        <location evidence="1">Membrane</location>
        <topology evidence="16">Peripheral membrane protein</topology>
    </subcellularLocation>
    <subcellularLocation>
        <location evidence="8">Cytoplasm</location>
        <location evidence="8">Cytoskeleton</location>
        <location evidence="8">Microtubule organizing center</location>
    </subcellularLocation>
    <subcellularLocation>
        <location evidence="7">Endoplasmic reticulum</location>
    </subcellularLocation>
    <subcellularLocation>
        <location evidence="7">Golgi apparatus</location>
    </subcellularLocation>
    <subcellularLocation>
        <location evidence="7">Cytoplasm</location>
    </subcellularLocation>
</comment>
<comment type="alternative products">
    <event type="alternative splicing"/>
    <isoform>
        <id>A6NC98-1</id>
        <name>1</name>
        <sequence type="displayed"/>
    </isoform>
    <isoform>
        <id>A6NC98-2</id>
        <name>2</name>
        <sequence type="described" ref="VSP_030962 VSP_030964"/>
    </isoform>
    <isoform>
        <id>A6NC98-3</id>
        <name>3</name>
        <sequence type="described" ref="VSP_030957 VSP_030958 VSP_030960 VSP_030961"/>
    </isoform>
    <isoform>
        <id>A6NC98-4</id>
        <name>4</name>
        <sequence type="described" ref="VSP_030963"/>
    </isoform>
    <isoform>
        <id>A6NC98-5</id>
        <name>5</name>
        <sequence type="described" ref="VSP_030956 VSP_030959 VSP_030965"/>
    </isoform>
    <isoform>
        <id>A6NC98-6</id>
        <name>6</name>
        <sequence type="described" ref="VSP_035405 VSP_035406"/>
    </isoform>
</comment>
<comment type="tissue specificity">
    <text evidence="7 8">Expressed in endothelium (at protein level) (PubMed:21289099). Expressed in NK cells (at protein level) (PubMed:25762780).</text>
</comment>
<comment type="induction">
    <text evidence="7">By endoplasmic reticulum stress.</text>
</comment>
<comment type="similarity">
    <text evidence="16">Belongs to the CCDC88 family.</text>
</comment>
<comment type="sequence caution" evidence="16">
    <conflict type="erroneous initiation">
        <sequence resource="EMBL-CDS" id="BAC03417"/>
    </conflict>
</comment>
<protein>
    <recommendedName>
        <fullName>Coiled-coil domain-containing protein 88B</fullName>
    </recommendedName>
    <alternativeName>
        <fullName>Brain leucine zipper domain-containing protein</fullName>
    </alternativeName>
    <alternativeName>
        <fullName evidence="13">Gipie</fullName>
    </alternativeName>
    <alternativeName>
        <fullName evidence="14">Hook-related protein 3</fullName>
        <shortName>HkRP3</shortName>
    </alternativeName>
</protein>